<reference key="1">
    <citation type="journal article" date="2009" name="J. Bacteriol.">
        <title>The genome of Burkholderia cenocepacia J2315, an epidemic pathogen of cystic fibrosis patients.</title>
        <authorList>
            <person name="Holden M.T."/>
            <person name="Seth-Smith H.M."/>
            <person name="Crossman L.C."/>
            <person name="Sebaihia M."/>
            <person name="Bentley S.D."/>
            <person name="Cerdeno-Tarraga A.M."/>
            <person name="Thomson N.R."/>
            <person name="Bason N."/>
            <person name="Quail M.A."/>
            <person name="Sharp S."/>
            <person name="Cherevach I."/>
            <person name="Churcher C."/>
            <person name="Goodhead I."/>
            <person name="Hauser H."/>
            <person name="Holroyd N."/>
            <person name="Mungall K."/>
            <person name="Scott P."/>
            <person name="Walker D."/>
            <person name="White B."/>
            <person name="Rose H."/>
            <person name="Iversen P."/>
            <person name="Mil-Homens D."/>
            <person name="Rocha E.P."/>
            <person name="Fialho A.M."/>
            <person name="Baldwin A."/>
            <person name="Dowson C."/>
            <person name="Barrell B.G."/>
            <person name="Govan J.R."/>
            <person name="Vandamme P."/>
            <person name="Hart C.A."/>
            <person name="Mahenthiralingam E."/>
            <person name="Parkhill J."/>
        </authorList>
    </citation>
    <scope>NUCLEOTIDE SEQUENCE [LARGE SCALE GENOMIC DNA]</scope>
    <source>
        <strain>ATCC BAA-245 / DSM 16553 / LMG 16656 / NCTC 13227 / J2315 / CF5610</strain>
    </source>
</reference>
<keyword id="KW-0067">ATP-binding</keyword>
<keyword id="KW-0997">Cell inner membrane</keyword>
<keyword id="KW-1003">Cell membrane</keyword>
<keyword id="KW-0406">Ion transport</keyword>
<keyword id="KW-0472">Membrane</keyword>
<keyword id="KW-0547">Nucleotide-binding</keyword>
<keyword id="KW-0630">Potassium</keyword>
<keyword id="KW-0633">Potassium transport</keyword>
<keyword id="KW-0812">Transmembrane</keyword>
<keyword id="KW-1133">Transmembrane helix</keyword>
<keyword id="KW-0813">Transport</keyword>
<name>KDPC_BURCJ</name>
<dbReference type="EMBL" id="AM747720">
    <property type="protein sequence ID" value="CAR52682.1"/>
    <property type="molecule type" value="Genomic_DNA"/>
</dbReference>
<dbReference type="RefSeq" id="WP_006481872.1">
    <property type="nucleotide sequence ID" value="NC_011000.1"/>
</dbReference>
<dbReference type="SMR" id="B4E5Q9"/>
<dbReference type="GeneID" id="56558878"/>
<dbReference type="KEGG" id="bcj:BCAL2381"/>
<dbReference type="eggNOG" id="COG2156">
    <property type="taxonomic scope" value="Bacteria"/>
</dbReference>
<dbReference type="HOGENOM" id="CLU_077094_2_0_4"/>
<dbReference type="BioCyc" id="BCEN216591:G1G1V-2627-MONOMER"/>
<dbReference type="Proteomes" id="UP000001035">
    <property type="component" value="Chromosome 1"/>
</dbReference>
<dbReference type="GO" id="GO:0005886">
    <property type="term" value="C:plasma membrane"/>
    <property type="evidence" value="ECO:0007669"/>
    <property type="project" value="UniProtKB-SubCell"/>
</dbReference>
<dbReference type="GO" id="GO:0005524">
    <property type="term" value="F:ATP binding"/>
    <property type="evidence" value="ECO:0007669"/>
    <property type="project" value="UniProtKB-UniRule"/>
</dbReference>
<dbReference type="GO" id="GO:0008556">
    <property type="term" value="F:P-type potassium transmembrane transporter activity"/>
    <property type="evidence" value="ECO:0007669"/>
    <property type="project" value="InterPro"/>
</dbReference>
<dbReference type="HAMAP" id="MF_00276">
    <property type="entry name" value="KdpC"/>
    <property type="match status" value="1"/>
</dbReference>
<dbReference type="InterPro" id="IPR003820">
    <property type="entry name" value="KdpC"/>
</dbReference>
<dbReference type="NCBIfam" id="TIGR00681">
    <property type="entry name" value="kdpC"/>
    <property type="match status" value="1"/>
</dbReference>
<dbReference type="NCBIfam" id="NF001454">
    <property type="entry name" value="PRK00315.1"/>
    <property type="match status" value="1"/>
</dbReference>
<dbReference type="PANTHER" id="PTHR30042">
    <property type="entry name" value="POTASSIUM-TRANSPORTING ATPASE C CHAIN"/>
    <property type="match status" value="1"/>
</dbReference>
<dbReference type="PANTHER" id="PTHR30042:SF2">
    <property type="entry name" value="POTASSIUM-TRANSPORTING ATPASE KDPC SUBUNIT"/>
    <property type="match status" value="1"/>
</dbReference>
<dbReference type="Pfam" id="PF02669">
    <property type="entry name" value="KdpC"/>
    <property type="match status" value="1"/>
</dbReference>
<dbReference type="PIRSF" id="PIRSF001296">
    <property type="entry name" value="K_ATPase_KdpC"/>
    <property type="match status" value="1"/>
</dbReference>
<evidence type="ECO:0000255" key="1">
    <source>
        <dbReference type="HAMAP-Rule" id="MF_00276"/>
    </source>
</evidence>
<sequence>MKSLIRPLVVLFVILTAVTGLAYPAVMTVFGQAVFPSQANGSLIEQDGKVVGSALIGQPFDAPKYFWGRLSATAPMPYNAAGSGGSNFGPLNPSLPDQVKARIAALRDAGTDLSKPVPVDLVTASASGLDPEITPAAAAYQVERVAKARHLAPDAVAQLVAANTTGRQFGVLGEPRVNVLKLNLALDAAQAAH</sequence>
<comment type="function">
    <text evidence="1">Part of the high-affinity ATP-driven potassium transport (or Kdp) system, which catalyzes the hydrolysis of ATP coupled with the electrogenic transport of potassium into the cytoplasm. This subunit acts as a catalytic chaperone that increases the ATP-binding affinity of the ATP-hydrolyzing subunit KdpB by the formation of a transient KdpB/KdpC/ATP ternary complex.</text>
</comment>
<comment type="subunit">
    <text evidence="1">The system is composed of three essential subunits: KdpA, KdpB and KdpC.</text>
</comment>
<comment type="subcellular location">
    <subcellularLocation>
        <location evidence="1">Cell inner membrane</location>
        <topology evidence="1">Single-pass membrane protein</topology>
    </subcellularLocation>
</comment>
<comment type="similarity">
    <text evidence="1">Belongs to the KdpC family.</text>
</comment>
<proteinExistence type="inferred from homology"/>
<feature type="chain" id="PRO_1000114715" description="Potassium-transporting ATPase KdpC subunit">
    <location>
        <begin position="1"/>
        <end position="193"/>
    </location>
</feature>
<feature type="transmembrane region" description="Helical" evidence="1">
    <location>
        <begin position="7"/>
        <end position="27"/>
    </location>
</feature>
<gene>
    <name evidence="1" type="primary">kdpC</name>
    <name type="ordered locus">BceJ2315_23410</name>
    <name type="ORF">BCAL2381</name>
</gene>
<protein>
    <recommendedName>
        <fullName evidence="1">Potassium-transporting ATPase KdpC subunit</fullName>
    </recommendedName>
    <alternativeName>
        <fullName evidence="1">ATP phosphohydrolase [potassium-transporting] C chain</fullName>
    </alternativeName>
    <alternativeName>
        <fullName evidence="1">Potassium-binding and translocating subunit C</fullName>
    </alternativeName>
    <alternativeName>
        <fullName evidence="1">Potassium-translocating ATPase C chain</fullName>
    </alternativeName>
</protein>
<accession>B4E5Q9</accession>
<organism>
    <name type="scientific">Burkholderia cenocepacia (strain ATCC BAA-245 / DSM 16553 / LMG 16656 / NCTC 13227 / J2315 / CF5610)</name>
    <name type="common">Burkholderia cepacia (strain J2315)</name>
    <dbReference type="NCBI Taxonomy" id="216591"/>
    <lineage>
        <taxon>Bacteria</taxon>
        <taxon>Pseudomonadati</taxon>
        <taxon>Pseudomonadota</taxon>
        <taxon>Betaproteobacteria</taxon>
        <taxon>Burkholderiales</taxon>
        <taxon>Burkholderiaceae</taxon>
        <taxon>Burkholderia</taxon>
        <taxon>Burkholderia cepacia complex</taxon>
    </lineage>
</organism>